<name>WFD11_MOUSE</name>
<comment type="subcellular location">
    <subcellularLocation>
        <location evidence="2">Secreted</location>
    </subcellularLocation>
</comment>
<comment type="miscellaneous">
    <text>Although this protein was isolated in a region containing several WAP proteins and was defined as a WAP protein, it does not contain a classical WAP domain.</text>
</comment>
<protein>
    <recommendedName>
        <fullName>Protein WFDC11</fullName>
    </recommendedName>
</protein>
<accession>A2A5H7</accession>
<evidence type="ECO:0000255" key="1"/>
<evidence type="ECO:0000305" key="2"/>
<reference key="1">
    <citation type="journal article" date="2009" name="PLoS Biol.">
        <title>Lineage-specific biology revealed by a finished genome assembly of the mouse.</title>
        <authorList>
            <person name="Church D.M."/>
            <person name="Goodstadt L."/>
            <person name="Hillier L.W."/>
            <person name="Zody M.C."/>
            <person name="Goldstein S."/>
            <person name="She X."/>
            <person name="Bult C.J."/>
            <person name="Agarwala R."/>
            <person name="Cherry J.L."/>
            <person name="DiCuccio M."/>
            <person name="Hlavina W."/>
            <person name="Kapustin Y."/>
            <person name="Meric P."/>
            <person name="Maglott D."/>
            <person name="Birtle Z."/>
            <person name="Marques A.C."/>
            <person name="Graves T."/>
            <person name="Zhou S."/>
            <person name="Teague B."/>
            <person name="Potamousis K."/>
            <person name="Churas C."/>
            <person name="Place M."/>
            <person name="Herschleb J."/>
            <person name="Runnheim R."/>
            <person name="Forrest D."/>
            <person name="Amos-Landgraf J."/>
            <person name="Schwartz D.C."/>
            <person name="Cheng Z."/>
            <person name="Lindblad-Toh K."/>
            <person name="Eichler E.E."/>
            <person name="Ponting C.P."/>
        </authorList>
    </citation>
    <scope>NUCLEOTIDE SEQUENCE [LARGE SCALE GENOMIC DNA]</scope>
    <source>
        <strain>C57BL/6J</strain>
    </source>
</reference>
<proteinExistence type="inferred from homology"/>
<feature type="signal peptide" evidence="1">
    <location>
        <begin position="1"/>
        <end position="21"/>
    </location>
</feature>
<feature type="chain" id="PRO_0000415847" description="Protein WFDC11">
    <location>
        <begin position="22"/>
        <end position="82"/>
    </location>
</feature>
<gene>
    <name type="primary">Wfdc11</name>
</gene>
<organism>
    <name type="scientific">Mus musculus</name>
    <name type="common">Mouse</name>
    <dbReference type="NCBI Taxonomy" id="10090"/>
    <lineage>
        <taxon>Eukaryota</taxon>
        <taxon>Metazoa</taxon>
        <taxon>Chordata</taxon>
        <taxon>Craniata</taxon>
        <taxon>Vertebrata</taxon>
        <taxon>Euteleostomi</taxon>
        <taxon>Mammalia</taxon>
        <taxon>Eutheria</taxon>
        <taxon>Euarchontoglires</taxon>
        <taxon>Glires</taxon>
        <taxon>Rodentia</taxon>
        <taxon>Myomorpha</taxon>
        <taxon>Muroidea</taxon>
        <taxon>Muridae</taxon>
        <taxon>Murinae</taxon>
        <taxon>Mus</taxon>
        <taxon>Mus</taxon>
    </lineage>
</organism>
<sequence>MKPSWFPCLVFLCMLLLSALGGRKNKYYPGELLLEECWGQPKTNDCVKKCSRTFKCVYRNHTCCWTYCGNICAENGKFFERK</sequence>
<keyword id="KW-1185">Reference proteome</keyword>
<keyword id="KW-0964">Secreted</keyword>
<keyword id="KW-0732">Signal</keyword>
<dbReference type="EMBL" id="AL591478">
    <property type="status" value="NOT_ANNOTATED_CDS"/>
    <property type="molecule type" value="Genomic_DNA"/>
</dbReference>
<dbReference type="CCDS" id="CCDS50797.1"/>
<dbReference type="RefSeq" id="NP_001155278.1">
    <property type="nucleotide sequence ID" value="NM_001161806.2"/>
</dbReference>
<dbReference type="RefSeq" id="NP_001400665.1">
    <property type="nucleotide sequence ID" value="NM_001413736.1"/>
</dbReference>
<dbReference type="RefSeq" id="XP_006500048.1">
    <property type="nucleotide sequence ID" value="XM_006499985.3"/>
</dbReference>
<dbReference type="STRING" id="10090.ENSMUSP00000104956"/>
<dbReference type="PhosphoSitePlus" id="A2A5H7"/>
<dbReference type="PaxDb" id="10090-ENSMUSP00000104956"/>
<dbReference type="Antibodypedia" id="70456">
    <property type="antibodies" value="25 antibodies from 5 providers"/>
</dbReference>
<dbReference type="Ensembl" id="ENSMUST00000109332.8">
    <property type="protein sequence ID" value="ENSMUSP00000104956.2"/>
    <property type="gene ID" value="ENSMUSG00000078940.9"/>
</dbReference>
<dbReference type="Ensembl" id="ENSMUST00000167694.2">
    <property type="protein sequence ID" value="ENSMUSP00000125964.2"/>
    <property type="gene ID" value="ENSMUSG00000078940.9"/>
</dbReference>
<dbReference type="GeneID" id="629761"/>
<dbReference type="KEGG" id="mmu:629761"/>
<dbReference type="UCSC" id="uc008nvp.1">
    <property type="organism name" value="mouse"/>
</dbReference>
<dbReference type="AGR" id="MGI:3651686"/>
<dbReference type="CTD" id="259239"/>
<dbReference type="MGI" id="MGI:3651686">
    <property type="gene designation" value="Wfdc11"/>
</dbReference>
<dbReference type="VEuPathDB" id="HostDB:ENSMUSG00000078940"/>
<dbReference type="eggNOG" id="ENOG502TE8U">
    <property type="taxonomic scope" value="Eukaryota"/>
</dbReference>
<dbReference type="GeneTree" id="ENSGT00940000163115"/>
<dbReference type="HOGENOM" id="CLU_191873_0_0_1"/>
<dbReference type="InParanoid" id="A2A5H7"/>
<dbReference type="OMA" id="ECWGQPN"/>
<dbReference type="OrthoDB" id="9542712at2759"/>
<dbReference type="PhylomeDB" id="A2A5H7"/>
<dbReference type="TreeFam" id="TF338513"/>
<dbReference type="BioGRID-ORCS" id="629761">
    <property type="hits" value="5 hits in 77 CRISPR screens"/>
</dbReference>
<dbReference type="PRO" id="PR:A2A5H7"/>
<dbReference type="Proteomes" id="UP000000589">
    <property type="component" value="Chromosome 2"/>
</dbReference>
<dbReference type="RNAct" id="A2A5H7">
    <property type="molecule type" value="protein"/>
</dbReference>
<dbReference type="Bgee" id="ENSMUSG00000078940">
    <property type="expression patterns" value="Expressed in animal zygote and 7 other cell types or tissues"/>
</dbReference>
<dbReference type="GO" id="GO:0005576">
    <property type="term" value="C:extracellular region"/>
    <property type="evidence" value="ECO:0007669"/>
    <property type="project" value="UniProtKB-SubCell"/>
</dbReference>